<proteinExistence type="evidence at protein level"/>
<gene>
    <name type="primary">TADA1</name>
    <name type="synonym">TADA1L</name>
</gene>
<name>TADA1_HUMAN</name>
<comment type="function">
    <text>Probably involved in transcriptional regulation.</text>
</comment>
<comment type="subunit">
    <text evidence="2">Component of the STAGA transcription coactivator-HAT complex, at least composed of SUPT3H, GCN5L2, TAF5L, TAF6L, SUPT7L, TADA3L, TAD1L, TAF10, TAF12, TRRAP and TAF9.</text>
</comment>
<comment type="subcellular location">
    <subcellularLocation>
        <location evidence="2">Nucleus</location>
    </subcellularLocation>
</comment>
<comment type="similarity">
    <text evidence="3">Belongs to the TADA1 family.</text>
</comment>
<feature type="chain" id="PRO_0000316015" description="Transcriptional adapter 1">
    <location>
        <begin position="1"/>
        <end position="335"/>
    </location>
</feature>
<feature type="region of interest" description="Disordered" evidence="1">
    <location>
        <begin position="83"/>
        <end position="103"/>
    </location>
</feature>
<feature type="compositionally biased region" description="Low complexity" evidence="1">
    <location>
        <begin position="84"/>
        <end position="93"/>
    </location>
</feature>
<feature type="compositionally biased region" description="Basic residues" evidence="1">
    <location>
        <begin position="94"/>
        <end position="103"/>
    </location>
</feature>
<feature type="sequence variant" id="VAR_038352" description="In dbSNP:rs2272792.">
    <original>R</original>
    <variation>Q</variation>
    <location>
        <position position="198"/>
    </location>
</feature>
<feature type="sequence conflict" description="In Ref. 1; BAF83653." evidence="3" ref="1">
    <original>F</original>
    <variation>S</variation>
    <location>
        <position position="62"/>
    </location>
</feature>
<feature type="helix" evidence="4">
    <location>
        <begin position="106"/>
        <end position="108"/>
    </location>
</feature>
<feature type="strand" evidence="4">
    <location>
        <begin position="109"/>
        <end position="111"/>
    </location>
</feature>
<feature type="turn" evidence="4">
    <location>
        <begin position="139"/>
        <end position="141"/>
    </location>
</feature>
<feature type="strand" evidence="4">
    <location>
        <begin position="142"/>
        <end position="144"/>
    </location>
</feature>
<feature type="helix" evidence="4">
    <location>
        <begin position="148"/>
        <end position="160"/>
    </location>
</feature>
<feature type="helix" evidence="4">
    <location>
        <begin position="171"/>
        <end position="192"/>
    </location>
</feature>
<feature type="turn" evidence="4">
    <location>
        <begin position="201"/>
        <end position="203"/>
    </location>
</feature>
<feature type="strand" evidence="4">
    <location>
        <begin position="209"/>
        <end position="211"/>
    </location>
</feature>
<feature type="helix" evidence="4">
    <location>
        <begin position="219"/>
        <end position="229"/>
    </location>
</feature>
<feature type="helix" evidence="4">
    <location>
        <begin position="250"/>
        <end position="264"/>
    </location>
</feature>
<feature type="helix" evidence="4">
    <location>
        <begin position="277"/>
        <end position="286"/>
    </location>
</feature>
<feature type="helix" evidence="4">
    <location>
        <begin position="294"/>
        <end position="305"/>
    </location>
</feature>
<feature type="helix" evidence="4">
    <location>
        <begin position="313"/>
        <end position="330"/>
    </location>
</feature>
<evidence type="ECO:0000256" key="1">
    <source>
        <dbReference type="SAM" id="MobiDB-lite"/>
    </source>
</evidence>
<evidence type="ECO:0000269" key="2">
    <source>
    </source>
</evidence>
<evidence type="ECO:0000305" key="3"/>
<evidence type="ECO:0007829" key="4">
    <source>
        <dbReference type="PDB" id="7KTR"/>
    </source>
</evidence>
<organism>
    <name type="scientific">Homo sapiens</name>
    <name type="common">Human</name>
    <dbReference type="NCBI Taxonomy" id="9606"/>
    <lineage>
        <taxon>Eukaryota</taxon>
        <taxon>Metazoa</taxon>
        <taxon>Chordata</taxon>
        <taxon>Craniata</taxon>
        <taxon>Vertebrata</taxon>
        <taxon>Euteleostomi</taxon>
        <taxon>Mammalia</taxon>
        <taxon>Eutheria</taxon>
        <taxon>Euarchontoglires</taxon>
        <taxon>Primates</taxon>
        <taxon>Haplorrhini</taxon>
        <taxon>Catarrhini</taxon>
        <taxon>Hominidae</taxon>
        <taxon>Homo</taxon>
    </lineage>
</organism>
<accession>Q96BN2</accession>
<accession>A8K4J9</accession>
<protein>
    <recommendedName>
        <fullName>Transcriptional adapter 1</fullName>
    </recommendedName>
    <alternativeName>
        <fullName>SPT3-associated factor 42</fullName>
        <shortName>STAF42</shortName>
    </alternativeName>
    <alternativeName>
        <fullName>Transcriptional adapter 1-like protein</fullName>
    </alternativeName>
</protein>
<dbReference type="EMBL" id="AK290964">
    <property type="protein sequence ID" value="BAF83653.1"/>
    <property type="molecule type" value="mRNA"/>
</dbReference>
<dbReference type="EMBL" id="AK291922">
    <property type="protein sequence ID" value="BAF84611.1"/>
    <property type="molecule type" value="mRNA"/>
</dbReference>
<dbReference type="EMBL" id="AL009182">
    <property type="status" value="NOT_ANNOTATED_CDS"/>
    <property type="molecule type" value="Genomic_DNA"/>
</dbReference>
<dbReference type="EMBL" id="AL008639">
    <property type="status" value="NOT_ANNOTATED_CDS"/>
    <property type="molecule type" value="Genomic_DNA"/>
</dbReference>
<dbReference type="EMBL" id="CH471067">
    <property type="protein sequence ID" value="EAW90778.1"/>
    <property type="molecule type" value="Genomic_DNA"/>
</dbReference>
<dbReference type="EMBL" id="BC015401">
    <property type="protein sequence ID" value="AAH15401.1"/>
    <property type="molecule type" value="mRNA"/>
</dbReference>
<dbReference type="CCDS" id="CCDS1255.1"/>
<dbReference type="RefSeq" id="NP_444281.1">
    <property type="nucleotide sequence ID" value="NM_053053.4"/>
</dbReference>
<dbReference type="PDB" id="7KTR">
    <property type="method" value="EM"/>
    <property type="resolution" value="2.93 A"/>
    <property type="chains" value="J=1-335"/>
</dbReference>
<dbReference type="PDB" id="7KTS">
    <property type="method" value="EM"/>
    <property type="resolution" value="19.09 A"/>
    <property type="chains" value="J=1-335"/>
</dbReference>
<dbReference type="PDB" id="8H7G">
    <property type="method" value="EM"/>
    <property type="resolution" value="3.70 A"/>
    <property type="chains" value="G=1-335"/>
</dbReference>
<dbReference type="PDBsum" id="7KTR"/>
<dbReference type="PDBsum" id="7KTS"/>
<dbReference type="PDBsum" id="8H7G"/>
<dbReference type="EMDB" id="EMD-23027"/>
<dbReference type="EMDB" id="EMD-23028"/>
<dbReference type="EMDB" id="EMD-34520"/>
<dbReference type="SMR" id="Q96BN2"/>
<dbReference type="BioGRID" id="125555">
    <property type="interactions" value="61"/>
</dbReference>
<dbReference type="ComplexPortal" id="CPX-6802">
    <property type="entry name" value="SAGA complex, KAT2B variant"/>
</dbReference>
<dbReference type="ComplexPortal" id="CPX-900">
    <property type="entry name" value="SAGA complex, KAT2A variant"/>
</dbReference>
<dbReference type="CORUM" id="Q96BN2"/>
<dbReference type="FunCoup" id="Q96BN2">
    <property type="interactions" value="2879"/>
</dbReference>
<dbReference type="IntAct" id="Q96BN2">
    <property type="interactions" value="47"/>
</dbReference>
<dbReference type="MINT" id="Q96BN2"/>
<dbReference type="STRING" id="9606.ENSP00000356848"/>
<dbReference type="iPTMnet" id="Q96BN2"/>
<dbReference type="PhosphoSitePlus" id="Q96BN2"/>
<dbReference type="BioMuta" id="TADA1"/>
<dbReference type="DMDM" id="74760738"/>
<dbReference type="jPOST" id="Q96BN2"/>
<dbReference type="MassIVE" id="Q96BN2"/>
<dbReference type="PaxDb" id="9606-ENSP00000356848"/>
<dbReference type="PeptideAtlas" id="Q96BN2"/>
<dbReference type="ProteomicsDB" id="76091"/>
<dbReference type="Pumba" id="Q96BN2"/>
<dbReference type="Antibodypedia" id="34337">
    <property type="antibodies" value="34 antibodies from 15 providers"/>
</dbReference>
<dbReference type="DNASU" id="117143"/>
<dbReference type="Ensembl" id="ENST00000367874.5">
    <property type="protein sequence ID" value="ENSP00000356848.4"/>
    <property type="gene ID" value="ENSG00000152382.6"/>
</dbReference>
<dbReference type="GeneID" id="117143"/>
<dbReference type="KEGG" id="hsa:117143"/>
<dbReference type="MANE-Select" id="ENST00000367874.5">
    <property type="protein sequence ID" value="ENSP00000356848.4"/>
    <property type="RefSeq nucleotide sequence ID" value="NM_053053.4"/>
    <property type="RefSeq protein sequence ID" value="NP_444281.1"/>
</dbReference>
<dbReference type="UCSC" id="uc001gdw.4">
    <property type="organism name" value="human"/>
</dbReference>
<dbReference type="AGR" id="HGNC:30631"/>
<dbReference type="CTD" id="117143"/>
<dbReference type="DisGeNET" id="117143"/>
<dbReference type="GeneCards" id="TADA1"/>
<dbReference type="HGNC" id="HGNC:30631">
    <property type="gene designation" value="TADA1"/>
</dbReference>
<dbReference type="HPA" id="ENSG00000152382">
    <property type="expression patterns" value="Low tissue specificity"/>
</dbReference>
<dbReference type="MIM" id="612763">
    <property type="type" value="gene"/>
</dbReference>
<dbReference type="neXtProt" id="NX_Q96BN2"/>
<dbReference type="OpenTargets" id="ENSG00000152382"/>
<dbReference type="PharmGKB" id="PA165752724"/>
<dbReference type="VEuPathDB" id="HostDB:ENSG00000152382"/>
<dbReference type="eggNOG" id="ENOG502QRMT">
    <property type="taxonomic scope" value="Eukaryota"/>
</dbReference>
<dbReference type="GeneTree" id="ENSGT00390000011644"/>
<dbReference type="HOGENOM" id="CLU_071612_0_0_1"/>
<dbReference type="InParanoid" id="Q96BN2"/>
<dbReference type="OMA" id="NIMTEDQ"/>
<dbReference type="OrthoDB" id="10264870at2759"/>
<dbReference type="PAN-GO" id="Q96BN2">
    <property type="GO annotations" value="3 GO annotations based on evolutionary models"/>
</dbReference>
<dbReference type="PhylomeDB" id="Q96BN2"/>
<dbReference type="TreeFam" id="TF324330"/>
<dbReference type="PathwayCommons" id="Q96BN2"/>
<dbReference type="Reactome" id="R-HSA-3214847">
    <property type="pathway name" value="HATs acetylate histones"/>
</dbReference>
<dbReference type="SignaLink" id="Q96BN2"/>
<dbReference type="SIGNOR" id="Q96BN2"/>
<dbReference type="BioGRID-ORCS" id="117143">
    <property type="hits" value="201 hits in 1183 CRISPR screens"/>
</dbReference>
<dbReference type="ChiTaRS" id="TADA1">
    <property type="organism name" value="human"/>
</dbReference>
<dbReference type="GenomeRNAi" id="117143"/>
<dbReference type="Pharos" id="Q96BN2">
    <property type="development level" value="Tdark"/>
</dbReference>
<dbReference type="PRO" id="PR:Q96BN2"/>
<dbReference type="Proteomes" id="UP000005640">
    <property type="component" value="Chromosome 1"/>
</dbReference>
<dbReference type="RNAct" id="Q96BN2">
    <property type="molecule type" value="protein"/>
</dbReference>
<dbReference type="Bgee" id="ENSG00000152382">
    <property type="expression patterns" value="Expressed in secondary oocyte and 179 other cell types or tissues"/>
</dbReference>
<dbReference type="GO" id="GO:0005829">
    <property type="term" value="C:cytosol"/>
    <property type="evidence" value="ECO:0000314"/>
    <property type="project" value="HPA"/>
</dbReference>
<dbReference type="GO" id="GO:0005925">
    <property type="term" value="C:focal adhesion"/>
    <property type="evidence" value="ECO:0000314"/>
    <property type="project" value="HPA"/>
</dbReference>
<dbReference type="GO" id="GO:0005654">
    <property type="term" value="C:nucleoplasm"/>
    <property type="evidence" value="ECO:0000314"/>
    <property type="project" value="HPA"/>
</dbReference>
<dbReference type="GO" id="GO:0005634">
    <property type="term" value="C:nucleus"/>
    <property type="evidence" value="ECO:0000314"/>
    <property type="project" value="UniProtKB"/>
</dbReference>
<dbReference type="GO" id="GO:0000124">
    <property type="term" value="C:SAGA complex"/>
    <property type="evidence" value="ECO:0000314"/>
    <property type="project" value="UniProtKB"/>
</dbReference>
<dbReference type="GO" id="GO:0003713">
    <property type="term" value="F:transcription coactivator activity"/>
    <property type="evidence" value="ECO:0000314"/>
    <property type="project" value="UniProtKB"/>
</dbReference>
<dbReference type="GO" id="GO:0045893">
    <property type="term" value="P:positive regulation of DNA-templated transcription"/>
    <property type="evidence" value="ECO:0000303"/>
    <property type="project" value="ComplexPortal"/>
</dbReference>
<dbReference type="GO" id="GO:0006282">
    <property type="term" value="P:regulation of DNA repair"/>
    <property type="evidence" value="ECO:0000303"/>
    <property type="project" value="ComplexPortal"/>
</dbReference>
<dbReference type="GO" id="GO:0043484">
    <property type="term" value="P:regulation of RNA splicing"/>
    <property type="evidence" value="ECO:0000303"/>
    <property type="project" value="ComplexPortal"/>
</dbReference>
<dbReference type="GO" id="GO:0006357">
    <property type="term" value="P:regulation of transcription by RNA polymerase II"/>
    <property type="evidence" value="ECO:0000318"/>
    <property type="project" value="GO_Central"/>
</dbReference>
<dbReference type="CDD" id="cd22934">
    <property type="entry name" value="HFD_TADA1"/>
    <property type="match status" value="1"/>
</dbReference>
<dbReference type="InterPro" id="IPR024738">
    <property type="entry name" value="Hfi1/Tada1"/>
</dbReference>
<dbReference type="PANTHER" id="PTHR21277">
    <property type="entry name" value="TRANSCRIPTIONAL ADAPTER 1"/>
    <property type="match status" value="1"/>
</dbReference>
<dbReference type="PANTHER" id="PTHR21277:SF5">
    <property type="entry name" value="TRANSCRIPTIONAL ADAPTER 1"/>
    <property type="match status" value="1"/>
</dbReference>
<dbReference type="Pfam" id="PF12767">
    <property type="entry name" value="SAGA-Tad1"/>
    <property type="match status" value="2"/>
</dbReference>
<sequence>MATFVSELEAAKKNLSEALGDNVKQYWANLKLWFKQKISKEEFDLEAHRLLTQDNVHSHNDFLLAILTRCQILVSTPDGAGSLPWPGGSAAKPGKPKGKKKLSSVRQKFDHRFQPQNPLSGAQQFVAKDPQDDDDLKLCSHTMMLPTRGQLEGRMIVTAYEHGLDNVTEEAVSAVVYAVENHLKDILTSVVSRRKAYRLRDGHFKYAFGSNVTPQPYLKNSVVAYNNLIESPPAFTAPCAGQNPASHPPPDDAEQQAALLLACSGDTLPASLPPVNMYDLFEALQVHREVIPTHTVYALNIERIITKLWHPNHEELQQDKVHRQRLAAKEGLLLC</sequence>
<keyword id="KW-0002">3D-structure</keyword>
<keyword id="KW-0539">Nucleus</keyword>
<keyword id="KW-1267">Proteomics identification</keyword>
<keyword id="KW-1185">Reference proteome</keyword>
<keyword id="KW-0804">Transcription</keyword>
<keyword id="KW-0805">Transcription regulation</keyword>
<reference key="1">
    <citation type="journal article" date="2004" name="Nat. Genet.">
        <title>Complete sequencing and characterization of 21,243 full-length human cDNAs.</title>
        <authorList>
            <person name="Ota T."/>
            <person name="Suzuki Y."/>
            <person name="Nishikawa T."/>
            <person name="Otsuki T."/>
            <person name="Sugiyama T."/>
            <person name="Irie R."/>
            <person name="Wakamatsu A."/>
            <person name="Hayashi K."/>
            <person name="Sato H."/>
            <person name="Nagai K."/>
            <person name="Kimura K."/>
            <person name="Makita H."/>
            <person name="Sekine M."/>
            <person name="Obayashi M."/>
            <person name="Nishi T."/>
            <person name="Shibahara T."/>
            <person name="Tanaka T."/>
            <person name="Ishii S."/>
            <person name="Yamamoto J."/>
            <person name="Saito K."/>
            <person name="Kawai Y."/>
            <person name="Isono Y."/>
            <person name="Nakamura Y."/>
            <person name="Nagahari K."/>
            <person name="Murakami K."/>
            <person name="Yasuda T."/>
            <person name="Iwayanagi T."/>
            <person name="Wagatsuma M."/>
            <person name="Shiratori A."/>
            <person name="Sudo H."/>
            <person name="Hosoiri T."/>
            <person name="Kaku Y."/>
            <person name="Kodaira H."/>
            <person name="Kondo H."/>
            <person name="Sugawara M."/>
            <person name="Takahashi M."/>
            <person name="Kanda K."/>
            <person name="Yokoi T."/>
            <person name="Furuya T."/>
            <person name="Kikkawa E."/>
            <person name="Omura Y."/>
            <person name="Abe K."/>
            <person name="Kamihara K."/>
            <person name="Katsuta N."/>
            <person name="Sato K."/>
            <person name="Tanikawa M."/>
            <person name="Yamazaki M."/>
            <person name="Ninomiya K."/>
            <person name="Ishibashi T."/>
            <person name="Yamashita H."/>
            <person name="Murakawa K."/>
            <person name="Fujimori K."/>
            <person name="Tanai H."/>
            <person name="Kimata M."/>
            <person name="Watanabe M."/>
            <person name="Hiraoka S."/>
            <person name="Chiba Y."/>
            <person name="Ishida S."/>
            <person name="Ono Y."/>
            <person name="Takiguchi S."/>
            <person name="Watanabe S."/>
            <person name="Yosida M."/>
            <person name="Hotuta T."/>
            <person name="Kusano J."/>
            <person name="Kanehori K."/>
            <person name="Takahashi-Fujii A."/>
            <person name="Hara H."/>
            <person name="Tanase T.-O."/>
            <person name="Nomura Y."/>
            <person name="Togiya S."/>
            <person name="Komai F."/>
            <person name="Hara R."/>
            <person name="Takeuchi K."/>
            <person name="Arita M."/>
            <person name="Imose N."/>
            <person name="Musashino K."/>
            <person name="Yuuki H."/>
            <person name="Oshima A."/>
            <person name="Sasaki N."/>
            <person name="Aotsuka S."/>
            <person name="Yoshikawa Y."/>
            <person name="Matsunawa H."/>
            <person name="Ichihara T."/>
            <person name="Shiohata N."/>
            <person name="Sano S."/>
            <person name="Moriya S."/>
            <person name="Momiyama H."/>
            <person name="Satoh N."/>
            <person name="Takami S."/>
            <person name="Terashima Y."/>
            <person name="Suzuki O."/>
            <person name="Nakagawa S."/>
            <person name="Senoh A."/>
            <person name="Mizoguchi H."/>
            <person name="Goto Y."/>
            <person name="Shimizu F."/>
            <person name="Wakebe H."/>
            <person name="Hishigaki H."/>
            <person name="Watanabe T."/>
            <person name="Sugiyama A."/>
            <person name="Takemoto M."/>
            <person name="Kawakami B."/>
            <person name="Yamazaki M."/>
            <person name="Watanabe K."/>
            <person name="Kumagai A."/>
            <person name="Itakura S."/>
            <person name="Fukuzumi Y."/>
            <person name="Fujimori Y."/>
            <person name="Komiyama M."/>
            <person name="Tashiro H."/>
            <person name="Tanigami A."/>
            <person name="Fujiwara T."/>
            <person name="Ono T."/>
            <person name="Yamada K."/>
            <person name="Fujii Y."/>
            <person name="Ozaki K."/>
            <person name="Hirao M."/>
            <person name="Ohmori Y."/>
            <person name="Kawabata A."/>
            <person name="Hikiji T."/>
            <person name="Kobatake N."/>
            <person name="Inagaki H."/>
            <person name="Ikema Y."/>
            <person name="Okamoto S."/>
            <person name="Okitani R."/>
            <person name="Kawakami T."/>
            <person name="Noguchi S."/>
            <person name="Itoh T."/>
            <person name="Shigeta K."/>
            <person name="Senba T."/>
            <person name="Matsumura K."/>
            <person name="Nakajima Y."/>
            <person name="Mizuno T."/>
            <person name="Morinaga M."/>
            <person name="Sasaki M."/>
            <person name="Togashi T."/>
            <person name="Oyama M."/>
            <person name="Hata H."/>
            <person name="Watanabe M."/>
            <person name="Komatsu T."/>
            <person name="Mizushima-Sugano J."/>
            <person name="Satoh T."/>
            <person name="Shirai Y."/>
            <person name="Takahashi Y."/>
            <person name="Nakagawa K."/>
            <person name="Okumura K."/>
            <person name="Nagase T."/>
            <person name="Nomura N."/>
            <person name="Kikuchi H."/>
            <person name="Masuho Y."/>
            <person name="Yamashita R."/>
            <person name="Nakai K."/>
            <person name="Yada T."/>
            <person name="Nakamura Y."/>
            <person name="Ohara O."/>
            <person name="Isogai T."/>
            <person name="Sugano S."/>
        </authorList>
    </citation>
    <scope>NUCLEOTIDE SEQUENCE [LARGE SCALE MRNA]</scope>
    <source>
        <tissue>Neuroepithelium</tissue>
    </source>
</reference>
<reference key="2">
    <citation type="journal article" date="2006" name="Nature">
        <title>The DNA sequence and biological annotation of human chromosome 1.</title>
        <authorList>
            <person name="Gregory S.G."/>
            <person name="Barlow K.F."/>
            <person name="McLay K.E."/>
            <person name="Kaul R."/>
            <person name="Swarbreck D."/>
            <person name="Dunham A."/>
            <person name="Scott C.E."/>
            <person name="Howe K.L."/>
            <person name="Woodfine K."/>
            <person name="Spencer C.C.A."/>
            <person name="Jones M.C."/>
            <person name="Gillson C."/>
            <person name="Searle S."/>
            <person name="Zhou Y."/>
            <person name="Kokocinski F."/>
            <person name="McDonald L."/>
            <person name="Evans R."/>
            <person name="Phillips K."/>
            <person name="Atkinson A."/>
            <person name="Cooper R."/>
            <person name="Jones C."/>
            <person name="Hall R.E."/>
            <person name="Andrews T.D."/>
            <person name="Lloyd C."/>
            <person name="Ainscough R."/>
            <person name="Almeida J.P."/>
            <person name="Ambrose K.D."/>
            <person name="Anderson F."/>
            <person name="Andrew R.W."/>
            <person name="Ashwell R.I.S."/>
            <person name="Aubin K."/>
            <person name="Babbage A.K."/>
            <person name="Bagguley C.L."/>
            <person name="Bailey J."/>
            <person name="Beasley H."/>
            <person name="Bethel G."/>
            <person name="Bird C.P."/>
            <person name="Bray-Allen S."/>
            <person name="Brown J.Y."/>
            <person name="Brown A.J."/>
            <person name="Buckley D."/>
            <person name="Burton J."/>
            <person name="Bye J."/>
            <person name="Carder C."/>
            <person name="Chapman J.C."/>
            <person name="Clark S.Y."/>
            <person name="Clarke G."/>
            <person name="Clee C."/>
            <person name="Cobley V."/>
            <person name="Collier R.E."/>
            <person name="Corby N."/>
            <person name="Coville G.J."/>
            <person name="Davies J."/>
            <person name="Deadman R."/>
            <person name="Dunn M."/>
            <person name="Earthrowl M."/>
            <person name="Ellington A.G."/>
            <person name="Errington H."/>
            <person name="Frankish A."/>
            <person name="Frankland J."/>
            <person name="French L."/>
            <person name="Garner P."/>
            <person name="Garnett J."/>
            <person name="Gay L."/>
            <person name="Ghori M.R.J."/>
            <person name="Gibson R."/>
            <person name="Gilby L.M."/>
            <person name="Gillett W."/>
            <person name="Glithero R.J."/>
            <person name="Grafham D.V."/>
            <person name="Griffiths C."/>
            <person name="Griffiths-Jones S."/>
            <person name="Grocock R."/>
            <person name="Hammond S."/>
            <person name="Harrison E.S.I."/>
            <person name="Hart E."/>
            <person name="Haugen E."/>
            <person name="Heath P.D."/>
            <person name="Holmes S."/>
            <person name="Holt K."/>
            <person name="Howden P.J."/>
            <person name="Hunt A.R."/>
            <person name="Hunt S.E."/>
            <person name="Hunter G."/>
            <person name="Isherwood J."/>
            <person name="James R."/>
            <person name="Johnson C."/>
            <person name="Johnson D."/>
            <person name="Joy A."/>
            <person name="Kay M."/>
            <person name="Kershaw J.K."/>
            <person name="Kibukawa M."/>
            <person name="Kimberley A.M."/>
            <person name="King A."/>
            <person name="Knights A.J."/>
            <person name="Lad H."/>
            <person name="Laird G."/>
            <person name="Lawlor S."/>
            <person name="Leongamornlert D.A."/>
            <person name="Lloyd D.M."/>
            <person name="Loveland J."/>
            <person name="Lovell J."/>
            <person name="Lush M.J."/>
            <person name="Lyne R."/>
            <person name="Martin S."/>
            <person name="Mashreghi-Mohammadi M."/>
            <person name="Matthews L."/>
            <person name="Matthews N.S.W."/>
            <person name="McLaren S."/>
            <person name="Milne S."/>
            <person name="Mistry S."/>
            <person name="Moore M.J.F."/>
            <person name="Nickerson T."/>
            <person name="O'Dell C.N."/>
            <person name="Oliver K."/>
            <person name="Palmeiri A."/>
            <person name="Palmer S.A."/>
            <person name="Parker A."/>
            <person name="Patel D."/>
            <person name="Pearce A.V."/>
            <person name="Peck A.I."/>
            <person name="Pelan S."/>
            <person name="Phelps K."/>
            <person name="Phillimore B.J."/>
            <person name="Plumb R."/>
            <person name="Rajan J."/>
            <person name="Raymond C."/>
            <person name="Rouse G."/>
            <person name="Saenphimmachak C."/>
            <person name="Sehra H.K."/>
            <person name="Sheridan E."/>
            <person name="Shownkeen R."/>
            <person name="Sims S."/>
            <person name="Skuce C.D."/>
            <person name="Smith M."/>
            <person name="Steward C."/>
            <person name="Subramanian S."/>
            <person name="Sycamore N."/>
            <person name="Tracey A."/>
            <person name="Tromans A."/>
            <person name="Van Helmond Z."/>
            <person name="Wall M."/>
            <person name="Wallis J.M."/>
            <person name="White S."/>
            <person name="Whitehead S.L."/>
            <person name="Wilkinson J.E."/>
            <person name="Willey D.L."/>
            <person name="Williams H."/>
            <person name="Wilming L."/>
            <person name="Wray P.W."/>
            <person name="Wu Z."/>
            <person name="Coulson A."/>
            <person name="Vaudin M."/>
            <person name="Sulston J.E."/>
            <person name="Durbin R.M."/>
            <person name="Hubbard T."/>
            <person name="Wooster R."/>
            <person name="Dunham I."/>
            <person name="Carter N.P."/>
            <person name="McVean G."/>
            <person name="Ross M.T."/>
            <person name="Harrow J."/>
            <person name="Olson M.V."/>
            <person name="Beck S."/>
            <person name="Rogers J."/>
            <person name="Bentley D.R."/>
        </authorList>
    </citation>
    <scope>NUCLEOTIDE SEQUENCE [LARGE SCALE GENOMIC DNA]</scope>
</reference>
<reference key="3">
    <citation type="submission" date="2005-07" db="EMBL/GenBank/DDBJ databases">
        <authorList>
            <person name="Mural R.J."/>
            <person name="Istrail S."/>
            <person name="Sutton G.G."/>
            <person name="Florea L."/>
            <person name="Halpern A.L."/>
            <person name="Mobarry C.M."/>
            <person name="Lippert R."/>
            <person name="Walenz B."/>
            <person name="Shatkay H."/>
            <person name="Dew I."/>
            <person name="Miller J.R."/>
            <person name="Flanigan M.J."/>
            <person name="Edwards N.J."/>
            <person name="Bolanos R."/>
            <person name="Fasulo D."/>
            <person name="Halldorsson B.V."/>
            <person name="Hannenhalli S."/>
            <person name="Turner R."/>
            <person name="Yooseph S."/>
            <person name="Lu F."/>
            <person name="Nusskern D.R."/>
            <person name="Shue B.C."/>
            <person name="Zheng X.H."/>
            <person name="Zhong F."/>
            <person name="Delcher A.L."/>
            <person name="Huson D.H."/>
            <person name="Kravitz S.A."/>
            <person name="Mouchard L."/>
            <person name="Reinert K."/>
            <person name="Remington K.A."/>
            <person name="Clark A.G."/>
            <person name="Waterman M.S."/>
            <person name="Eichler E.E."/>
            <person name="Adams M.D."/>
            <person name="Hunkapiller M.W."/>
            <person name="Myers E.W."/>
            <person name="Venter J.C."/>
        </authorList>
    </citation>
    <scope>NUCLEOTIDE SEQUENCE [LARGE SCALE GENOMIC DNA]</scope>
</reference>
<reference key="4">
    <citation type="journal article" date="2004" name="Genome Res.">
        <title>The status, quality, and expansion of the NIH full-length cDNA project: the Mammalian Gene Collection (MGC).</title>
        <authorList>
            <consortium name="The MGC Project Team"/>
        </authorList>
    </citation>
    <scope>NUCLEOTIDE SEQUENCE [LARGE SCALE MRNA]</scope>
    <source>
        <tissue>Brain</tissue>
    </source>
</reference>
<reference key="5">
    <citation type="journal article" date="2001" name="Mol. Cell. Biol.">
        <title>Human STAGA complex is a chromatin-acetylating transcription coactivator that interacts with pre-mRNA splicing and DNA damage-binding factors in vivo.</title>
        <authorList>
            <person name="Martinez E."/>
            <person name="Palhan V.B."/>
            <person name="Tjernberg A."/>
            <person name="Lymar E.S."/>
            <person name="Gamper A.M."/>
            <person name="Kundu T.K."/>
            <person name="Chait B.T."/>
            <person name="Roeder R.G."/>
        </authorList>
    </citation>
    <scope>IDENTIFICATION IN THE STAGA COMPLEX</scope>
    <scope>SUBCELLULAR LOCATION</scope>
    <scope>IDENTIFICATION BY MASS SPECTROMETRY</scope>
</reference>